<reference key="1">
    <citation type="journal article" date="2001" name="Proc. Natl. Acad. Sci. U.S.A.">
        <title>Analysis of the chromosome sequence of the legume symbiont Sinorhizobium meliloti strain 1021.</title>
        <authorList>
            <person name="Capela D."/>
            <person name="Barloy-Hubler F."/>
            <person name="Gouzy J."/>
            <person name="Bothe G."/>
            <person name="Ampe F."/>
            <person name="Batut J."/>
            <person name="Boistard P."/>
            <person name="Becker A."/>
            <person name="Boutry M."/>
            <person name="Cadieu E."/>
            <person name="Dreano S."/>
            <person name="Gloux S."/>
            <person name="Godrie T."/>
            <person name="Goffeau A."/>
            <person name="Kahn D."/>
            <person name="Kiss E."/>
            <person name="Lelaure V."/>
            <person name="Masuy D."/>
            <person name="Pohl T."/>
            <person name="Portetelle D."/>
            <person name="Puehler A."/>
            <person name="Purnelle B."/>
            <person name="Ramsperger U."/>
            <person name="Renard C."/>
            <person name="Thebault P."/>
            <person name="Vandenbol M."/>
            <person name="Weidner S."/>
            <person name="Galibert F."/>
        </authorList>
    </citation>
    <scope>NUCLEOTIDE SEQUENCE [LARGE SCALE GENOMIC DNA]</scope>
    <source>
        <strain>1021</strain>
    </source>
</reference>
<reference key="2">
    <citation type="journal article" date="2001" name="Science">
        <title>The composite genome of the legume symbiont Sinorhizobium meliloti.</title>
        <authorList>
            <person name="Galibert F."/>
            <person name="Finan T.M."/>
            <person name="Long S.R."/>
            <person name="Puehler A."/>
            <person name="Abola P."/>
            <person name="Ampe F."/>
            <person name="Barloy-Hubler F."/>
            <person name="Barnett M.J."/>
            <person name="Becker A."/>
            <person name="Boistard P."/>
            <person name="Bothe G."/>
            <person name="Boutry M."/>
            <person name="Bowser L."/>
            <person name="Buhrmester J."/>
            <person name="Cadieu E."/>
            <person name="Capela D."/>
            <person name="Chain P."/>
            <person name="Cowie A."/>
            <person name="Davis R.W."/>
            <person name="Dreano S."/>
            <person name="Federspiel N.A."/>
            <person name="Fisher R.F."/>
            <person name="Gloux S."/>
            <person name="Godrie T."/>
            <person name="Goffeau A."/>
            <person name="Golding B."/>
            <person name="Gouzy J."/>
            <person name="Gurjal M."/>
            <person name="Hernandez-Lucas I."/>
            <person name="Hong A."/>
            <person name="Huizar L."/>
            <person name="Hyman R.W."/>
            <person name="Jones T."/>
            <person name="Kahn D."/>
            <person name="Kahn M.L."/>
            <person name="Kalman S."/>
            <person name="Keating D.H."/>
            <person name="Kiss E."/>
            <person name="Komp C."/>
            <person name="Lelaure V."/>
            <person name="Masuy D."/>
            <person name="Palm C."/>
            <person name="Peck M.C."/>
            <person name="Pohl T.M."/>
            <person name="Portetelle D."/>
            <person name="Purnelle B."/>
            <person name="Ramsperger U."/>
            <person name="Surzycki R."/>
            <person name="Thebault P."/>
            <person name="Vandenbol M."/>
            <person name="Vorhoelter F.J."/>
            <person name="Weidner S."/>
            <person name="Wells D.H."/>
            <person name="Wong K."/>
            <person name="Yeh K.-C."/>
            <person name="Batut J."/>
        </authorList>
    </citation>
    <scope>NUCLEOTIDE SEQUENCE [LARGE SCALE GENOMIC DNA]</scope>
    <source>
        <strain>1021</strain>
    </source>
</reference>
<name>UREG_RHIME</name>
<evidence type="ECO:0000255" key="1">
    <source>
        <dbReference type="HAMAP-Rule" id="MF_01389"/>
    </source>
</evidence>
<keyword id="KW-0143">Chaperone</keyword>
<keyword id="KW-0963">Cytoplasm</keyword>
<keyword id="KW-0342">GTP-binding</keyword>
<keyword id="KW-0996">Nickel insertion</keyword>
<keyword id="KW-0547">Nucleotide-binding</keyword>
<keyword id="KW-1185">Reference proteome</keyword>
<organism>
    <name type="scientific">Rhizobium meliloti (strain 1021)</name>
    <name type="common">Ensifer meliloti</name>
    <name type="synonym">Sinorhizobium meliloti</name>
    <dbReference type="NCBI Taxonomy" id="266834"/>
    <lineage>
        <taxon>Bacteria</taxon>
        <taxon>Pseudomonadati</taxon>
        <taxon>Pseudomonadota</taxon>
        <taxon>Alphaproteobacteria</taxon>
        <taxon>Hyphomicrobiales</taxon>
        <taxon>Rhizobiaceae</taxon>
        <taxon>Sinorhizobium/Ensifer group</taxon>
        <taxon>Sinorhizobium</taxon>
    </lineage>
</organism>
<sequence>MPSKNGPLRIGIGGPVGSGKTALTDKLCKAMREKYSVAVVTNDIYTKEDAEALVRMQALPSERIVGVETGGCPHTAIREDASINLQAIADLNRRIPDLDVVFIESGGDNLAATFSPDLADLTIYVISVCQGEEIPRKGGPGITRSDLLVINKKDLAPYVGADLGVMERDAARMRAEKPFVFSDMKRGDGVERIVEFLTVHGGL</sequence>
<proteinExistence type="inferred from homology"/>
<protein>
    <recommendedName>
        <fullName evidence="1">Urease accessory protein UreG</fullName>
    </recommendedName>
</protein>
<comment type="function">
    <text evidence="1">Facilitates the functional incorporation of the urease nickel metallocenter. This process requires GTP hydrolysis, probably effectuated by UreG.</text>
</comment>
<comment type="subunit">
    <text evidence="1">Homodimer. UreD, UreF and UreG form a complex that acts as a GTP-hydrolysis-dependent molecular chaperone, activating the urease apoprotein by helping to assemble the nickel containing metallocenter of UreC. The UreE protein probably delivers the nickel.</text>
</comment>
<comment type="subcellular location">
    <subcellularLocation>
        <location evidence="1">Cytoplasm</location>
    </subcellularLocation>
</comment>
<comment type="similarity">
    <text evidence="1">Belongs to the SIMIBI class G3E GTPase family. UreG subfamily.</text>
</comment>
<accession>Q92MY5</accession>
<feature type="chain" id="PRO_1000145214" description="Urease accessory protein UreG">
    <location>
        <begin position="1"/>
        <end position="203"/>
    </location>
</feature>
<feature type="binding site" evidence="1">
    <location>
        <begin position="14"/>
        <end position="21"/>
    </location>
    <ligand>
        <name>GTP</name>
        <dbReference type="ChEBI" id="CHEBI:37565"/>
    </ligand>
</feature>
<dbReference type="EMBL" id="AL591688">
    <property type="protein sequence ID" value="CAC47042.1"/>
    <property type="molecule type" value="Genomic_DNA"/>
</dbReference>
<dbReference type="RefSeq" id="NP_386569.1">
    <property type="nucleotide sequence ID" value="NC_003047.1"/>
</dbReference>
<dbReference type="RefSeq" id="WP_003525604.1">
    <property type="nucleotide sequence ID" value="NC_003047.1"/>
</dbReference>
<dbReference type="SMR" id="Q92MY5"/>
<dbReference type="EnsemblBacteria" id="CAC47042">
    <property type="protein sequence ID" value="CAC47042"/>
    <property type="gene ID" value="SMc01830"/>
</dbReference>
<dbReference type="GeneID" id="89576854"/>
<dbReference type="KEGG" id="sme:SMc01830"/>
<dbReference type="PATRIC" id="fig|266834.11.peg.3951"/>
<dbReference type="eggNOG" id="COG0378">
    <property type="taxonomic scope" value="Bacteria"/>
</dbReference>
<dbReference type="HOGENOM" id="CLU_072144_1_0_5"/>
<dbReference type="OrthoDB" id="9802035at2"/>
<dbReference type="Proteomes" id="UP000001976">
    <property type="component" value="Chromosome"/>
</dbReference>
<dbReference type="GO" id="GO:0005737">
    <property type="term" value="C:cytoplasm"/>
    <property type="evidence" value="ECO:0007669"/>
    <property type="project" value="UniProtKB-SubCell"/>
</dbReference>
<dbReference type="GO" id="GO:0005525">
    <property type="term" value="F:GTP binding"/>
    <property type="evidence" value="ECO:0007669"/>
    <property type="project" value="UniProtKB-KW"/>
</dbReference>
<dbReference type="GO" id="GO:0003924">
    <property type="term" value="F:GTPase activity"/>
    <property type="evidence" value="ECO:0007669"/>
    <property type="project" value="InterPro"/>
</dbReference>
<dbReference type="GO" id="GO:0016151">
    <property type="term" value="F:nickel cation binding"/>
    <property type="evidence" value="ECO:0007669"/>
    <property type="project" value="UniProtKB-UniRule"/>
</dbReference>
<dbReference type="GO" id="GO:0043419">
    <property type="term" value="P:urea catabolic process"/>
    <property type="evidence" value="ECO:0007669"/>
    <property type="project" value="InterPro"/>
</dbReference>
<dbReference type="CDD" id="cd05540">
    <property type="entry name" value="UreG"/>
    <property type="match status" value="1"/>
</dbReference>
<dbReference type="FunFam" id="3.40.50.300:FF:000208">
    <property type="entry name" value="Urease accessory protein UreG"/>
    <property type="match status" value="1"/>
</dbReference>
<dbReference type="Gene3D" id="3.40.50.300">
    <property type="entry name" value="P-loop containing nucleotide triphosphate hydrolases"/>
    <property type="match status" value="1"/>
</dbReference>
<dbReference type="HAMAP" id="MF_01389">
    <property type="entry name" value="UreG"/>
    <property type="match status" value="1"/>
</dbReference>
<dbReference type="InterPro" id="IPR003495">
    <property type="entry name" value="CobW/HypB/UreG_nucleotide-bd"/>
</dbReference>
<dbReference type="InterPro" id="IPR027417">
    <property type="entry name" value="P-loop_NTPase"/>
</dbReference>
<dbReference type="InterPro" id="IPR004400">
    <property type="entry name" value="UreG"/>
</dbReference>
<dbReference type="NCBIfam" id="TIGR00101">
    <property type="entry name" value="ureG"/>
    <property type="match status" value="1"/>
</dbReference>
<dbReference type="PANTHER" id="PTHR31715">
    <property type="entry name" value="UREASE ACCESSORY PROTEIN G"/>
    <property type="match status" value="1"/>
</dbReference>
<dbReference type="PANTHER" id="PTHR31715:SF0">
    <property type="entry name" value="UREASE ACCESSORY PROTEIN G"/>
    <property type="match status" value="1"/>
</dbReference>
<dbReference type="Pfam" id="PF02492">
    <property type="entry name" value="cobW"/>
    <property type="match status" value="1"/>
</dbReference>
<dbReference type="PIRSF" id="PIRSF005624">
    <property type="entry name" value="Ni-bind_GTPase"/>
    <property type="match status" value="1"/>
</dbReference>
<dbReference type="SUPFAM" id="SSF52540">
    <property type="entry name" value="P-loop containing nucleoside triphosphate hydrolases"/>
    <property type="match status" value="1"/>
</dbReference>
<gene>
    <name evidence="1" type="primary">ureG</name>
    <name type="ordered locus">R02463</name>
    <name type="ORF">SMc01830</name>
</gene>